<evidence type="ECO:0000255" key="1">
    <source>
        <dbReference type="HAMAP-Rule" id="MF_00210"/>
    </source>
</evidence>
<evidence type="ECO:0007829" key="2">
    <source>
        <dbReference type="PDB" id="5XWB"/>
    </source>
</evidence>
<name>AROA_COLP3</name>
<accession>Q482G5</accession>
<feature type="chain" id="PRO_1000012428" description="3-phosphoshikimate 1-carboxyvinyltransferase">
    <location>
        <begin position="1"/>
        <end position="426"/>
    </location>
</feature>
<feature type="active site" description="Proton acceptor" evidence="1">
    <location>
        <position position="314"/>
    </location>
</feature>
<feature type="binding site" evidence="1">
    <location>
        <position position="22"/>
    </location>
    <ligand>
        <name>3-phosphoshikimate</name>
        <dbReference type="ChEBI" id="CHEBI:145989"/>
    </ligand>
</feature>
<feature type="binding site" evidence="1">
    <location>
        <position position="22"/>
    </location>
    <ligand>
        <name>phosphoenolpyruvate</name>
        <dbReference type="ChEBI" id="CHEBI:58702"/>
    </ligand>
</feature>
<feature type="binding site" evidence="1">
    <location>
        <position position="23"/>
    </location>
    <ligand>
        <name>3-phosphoshikimate</name>
        <dbReference type="ChEBI" id="CHEBI:145989"/>
    </ligand>
</feature>
<feature type="binding site" evidence="1">
    <location>
        <position position="27"/>
    </location>
    <ligand>
        <name>3-phosphoshikimate</name>
        <dbReference type="ChEBI" id="CHEBI:145989"/>
    </ligand>
</feature>
<feature type="binding site" evidence="1">
    <location>
        <position position="96"/>
    </location>
    <ligand>
        <name>phosphoenolpyruvate</name>
        <dbReference type="ChEBI" id="CHEBI:58702"/>
    </ligand>
</feature>
<feature type="binding site" evidence="1">
    <location>
        <position position="124"/>
    </location>
    <ligand>
        <name>phosphoenolpyruvate</name>
        <dbReference type="ChEBI" id="CHEBI:58702"/>
    </ligand>
</feature>
<feature type="binding site" evidence="1">
    <location>
        <position position="170"/>
    </location>
    <ligand>
        <name>3-phosphoshikimate</name>
        <dbReference type="ChEBI" id="CHEBI:145989"/>
    </ligand>
</feature>
<feature type="binding site" evidence="1">
    <location>
        <position position="171"/>
    </location>
    <ligand>
        <name>3-phosphoshikimate</name>
        <dbReference type="ChEBI" id="CHEBI:145989"/>
    </ligand>
</feature>
<feature type="binding site" evidence="1">
    <location>
        <position position="172"/>
    </location>
    <ligand>
        <name>3-phosphoshikimate</name>
        <dbReference type="ChEBI" id="CHEBI:145989"/>
    </ligand>
</feature>
<feature type="binding site" evidence="1">
    <location>
        <position position="172"/>
    </location>
    <ligand>
        <name>phosphoenolpyruvate</name>
        <dbReference type="ChEBI" id="CHEBI:58702"/>
    </ligand>
</feature>
<feature type="binding site" evidence="1">
    <location>
        <position position="198"/>
    </location>
    <ligand>
        <name>3-phosphoshikimate</name>
        <dbReference type="ChEBI" id="CHEBI:145989"/>
    </ligand>
</feature>
<feature type="binding site" evidence="1">
    <location>
        <position position="314"/>
    </location>
    <ligand>
        <name>3-phosphoshikimate</name>
        <dbReference type="ChEBI" id="CHEBI:145989"/>
    </ligand>
</feature>
<feature type="binding site" evidence="1">
    <location>
        <position position="337"/>
    </location>
    <ligand>
        <name>3-phosphoshikimate</name>
        <dbReference type="ChEBI" id="CHEBI:145989"/>
    </ligand>
</feature>
<feature type="binding site" evidence="1">
    <location>
        <position position="341"/>
    </location>
    <ligand>
        <name>3-phosphoshikimate</name>
        <dbReference type="ChEBI" id="CHEBI:145989"/>
    </ligand>
</feature>
<feature type="binding site" evidence="1">
    <location>
        <position position="345"/>
    </location>
    <ligand>
        <name>phosphoenolpyruvate</name>
        <dbReference type="ChEBI" id="CHEBI:58702"/>
    </ligand>
</feature>
<feature type="binding site" evidence="1">
    <location>
        <position position="387"/>
    </location>
    <ligand>
        <name>phosphoenolpyruvate</name>
        <dbReference type="ChEBI" id="CHEBI:58702"/>
    </ligand>
</feature>
<feature type="binding site" evidence="1">
    <location>
        <position position="412"/>
    </location>
    <ligand>
        <name>phosphoenolpyruvate</name>
        <dbReference type="ChEBI" id="CHEBI:58702"/>
    </ligand>
</feature>
<feature type="strand" evidence="2">
    <location>
        <begin position="3"/>
        <end position="6"/>
    </location>
</feature>
<feature type="strand" evidence="2">
    <location>
        <begin position="10"/>
        <end position="12"/>
    </location>
</feature>
<feature type="strand" evidence="2">
    <location>
        <begin position="14"/>
        <end position="17"/>
    </location>
</feature>
<feature type="helix" evidence="2">
    <location>
        <begin position="22"/>
        <end position="34"/>
    </location>
</feature>
<feature type="strand" evidence="2">
    <location>
        <begin position="35"/>
        <end position="43"/>
    </location>
</feature>
<feature type="helix" evidence="2">
    <location>
        <begin position="48"/>
        <end position="59"/>
    </location>
</feature>
<feature type="strand" evidence="2">
    <location>
        <begin position="64"/>
        <end position="67"/>
    </location>
</feature>
<feature type="turn" evidence="2">
    <location>
        <begin position="68"/>
        <end position="71"/>
    </location>
</feature>
<feature type="strand" evidence="2">
    <location>
        <begin position="72"/>
        <end position="76"/>
    </location>
</feature>
<feature type="strand" evidence="2">
    <location>
        <begin position="79"/>
        <end position="81"/>
    </location>
</feature>
<feature type="strand" evidence="2">
    <location>
        <begin position="88"/>
        <end position="91"/>
    </location>
</feature>
<feature type="helix" evidence="2">
    <location>
        <begin position="96"/>
        <end position="107"/>
    </location>
</feature>
<feature type="strand" evidence="2">
    <location>
        <begin position="109"/>
        <end position="116"/>
    </location>
</feature>
<feature type="helix" evidence="2">
    <location>
        <begin position="119"/>
        <end position="122"/>
    </location>
</feature>
<feature type="helix" evidence="2">
    <location>
        <begin position="127"/>
        <end position="135"/>
    </location>
</feature>
<feature type="strand" evidence="2">
    <location>
        <begin position="139"/>
        <end position="145"/>
    </location>
</feature>
<feature type="strand" evidence="2">
    <location>
        <begin position="151"/>
        <end position="154"/>
    </location>
</feature>
<feature type="strand" evidence="2">
    <location>
        <begin position="161"/>
        <end position="165"/>
    </location>
</feature>
<feature type="helix" evidence="2">
    <location>
        <begin position="172"/>
        <end position="180"/>
    </location>
</feature>
<feature type="helix" evidence="2">
    <location>
        <begin position="181"/>
        <end position="183"/>
    </location>
</feature>
<feature type="strand" evidence="2">
    <location>
        <begin position="184"/>
        <end position="186"/>
    </location>
</feature>
<feature type="strand" evidence="2">
    <location>
        <begin position="188"/>
        <end position="192"/>
    </location>
</feature>
<feature type="helix" evidence="2">
    <location>
        <begin position="199"/>
        <end position="211"/>
    </location>
</feature>
<feature type="strand" evidence="2">
    <location>
        <begin position="217"/>
        <end position="219"/>
    </location>
</feature>
<feature type="turn" evidence="2">
    <location>
        <begin position="220"/>
        <end position="222"/>
    </location>
</feature>
<feature type="strand" evidence="2">
    <location>
        <begin position="223"/>
        <end position="226"/>
    </location>
</feature>
<feature type="strand" evidence="2">
    <location>
        <begin position="236"/>
        <end position="239"/>
    </location>
</feature>
<feature type="helix" evidence="2">
    <location>
        <begin position="244"/>
        <end position="257"/>
    </location>
</feature>
<feature type="strand" evidence="2">
    <location>
        <begin position="259"/>
        <end position="265"/>
    </location>
</feature>
<feature type="helix" evidence="2">
    <location>
        <begin position="273"/>
        <end position="276"/>
    </location>
</feature>
<feature type="helix" evidence="2">
    <location>
        <begin position="277"/>
        <end position="284"/>
    </location>
</feature>
<feature type="strand" evidence="2">
    <location>
        <begin position="287"/>
        <end position="290"/>
    </location>
</feature>
<feature type="strand" evidence="2">
    <location>
        <begin position="292"/>
        <end position="298"/>
    </location>
</feature>
<feature type="strand" evidence="2">
    <location>
        <begin position="306"/>
        <end position="308"/>
    </location>
</feature>
<feature type="helix" evidence="2">
    <location>
        <begin position="313"/>
        <end position="322"/>
    </location>
</feature>
<feature type="helix" evidence="2">
    <location>
        <begin position="323"/>
        <end position="325"/>
    </location>
</feature>
<feature type="strand" evidence="2">
    <location>
        <begin position="326"/>
        <end position="328"/>
    </location>
</feature>
<feature type="strand" evidence="2">
    <location>
        <begin position="330"/>
        <end position="334"/>
    </location>
</feature>
<feature type="helix" evidence="2">
    <location>
        <begin position="336"/>
        <end position="340"/>
    </location>
</feature>
<feature type="strand" evidence="2">
    <location>
        <begin position="341"/>
        <end position="343"/>
    </location>
</feature>
<feature type="helix" evidence="2">
    <location>
        <begin position="345"/>
        <end position="355"/>
    </location>
</feature>
<feature type="strand" evidence="2">
    <location>
        <begin position="359"/>
        <end position="362"/>
    </location>
</feature>
<feature type="strand" evidence="2">
    <location>
        <begin position="364"/>
        <end position="370"/>
    </location>
</feature>
<feature type="strand" evidence="2">
    <location>
        <begin position="378"/>
        <end position="380"/>
    </location>
</feature>
<feature type="helix" evidence="2">
    <location>
        <begin position="386"/>
        <end position="392"/>
    </location>
</feature>
<feature type="helix" evidence="2">
    <location>
        <begin position="393"/>
        <end position="397"/>
    </location>
</feature>
<feature type="strand" evidence="2">
    <location>
        <begin position="398"/>
        <end position="400"/>
    </location>
</feature>
<feature type="strand" evidence="2">
    <location>
        <begin position="402"/>
        <end position="405"/>
    </location>
</feature>
<feature type="helix" evidence="2">
    <location>
        <begin position="407"/>
        <end position="410"/>
    </location>
</feature>
<feature type="turn" evidence="2">
    <location>
        <begin position="411"/>
        <end position="413"/>
    </location>
</feature>
<feature type="helix" evidence="2">
    <location>
        <begin position="417"/>
        <end position="423"/>
    </location>
</feature>
<keyword id="KW-0002">3D-structure</keyword>
<keyword id="KW-0028">Amino-acid biosynthesis</keyword>
<keyword id="KW-0057">Aromatic amino acid biosynthesis</keyword>
<keyword id="KW-0963">Cytoplasm</keyword>
<keyword id="KW-0808">Transferase</keyword>
<organism>
    <name type="scientific">Colwellia psychrerythraea (strain 34H / ATCC BAA-681)</name>
    <name type="common">Vibrio psychroerythus</name>
    <dbReference type="NCBI Taxonomy" id="167879"/>
    <lineage>
        <taxon>Bacteria</taxon>
        <taxon>Pseudomonadati</taxon>
        <taxon>Pseudomonadota</taxon>
        <taxon>Gammaproteobacteria</taxon>
        <taxon>Alteromonadales</taxon>
        <taxon>Colwelliaceae</taxon>
        <taxon>Colwellia</taxon>
    </lineage>
</organism>
<sequence>MEQLTLNPIGKINGEIFLPGSKSLSNRALLIAALANGVTKITNLLVSDDINHMLNALKSLGIEYTLSDCGTECTVIGNGGFFNAKKPLELYLGNAGTAMRPLCAALAASEGEFILTGEPRMKERPIGHLVDALAQLDADIEYLENKDYPPVKIKGKALTGNTVTIDGSISSQFLTAILMIAPLLETNTTIEIDGELVSKPYIDITLDIMRRFNVSVQNNDYKSFIVNGKQSYQALDKYMVEGDASSASYFLAAGAIKGGEVTVHGIGKLSVQGDKHFADVLEKMGAEIHWKDESITVIGKPLTAVDMDMNHIPDAAMTIATTALFATGTTTIRNIYNWRVKETDRLNAMATELRKVGAEVVEGKDYISITPPKSLKHAEIDTYNDHRVAMCFSLVALSDTPVTINDPKCTAKTFPDYFDKLAQVSC</sequence>
<dbReference type="EC" id="2.5.1.19" evidence="1"/>
<dbReference type="EMBL" id="CP000083">
    <property type="protein sequence ID" value="AAZ27668.1"/>
    <property type="molecule type" value="Genomic_DNA"/>
</dbReference>
<dbReference type="RefSeq" id="WP_011043147.1">
    <property type="nucleotide sequence ID" value="NC_003910.7"/>
</dbReference>
<dbReference type="PDB" id="5XWB">
    <property type="method" value="X-ray"/>
    <property type="resolution" value="2.20 A"/>
    <property type="chains" value="A/B=1-426"/>
</dbReference>
<dbReference type="PDBsum" id="5XWB"/>
<dbReference type="SMR" id="Q482G5"/>
<dbReference type="STRING" id="167879.CPS_2333"/>
<dbReference type="KEGG" id="cps:CPS_2333"/>
<dbReference type="eggNOG" id="COG0128">
    <property type="taxonomic scope" value="Bacteria"/>
</dbReference>
<dbReference type="HOGENOM" id="CLU_024321_0_0_6"/>
<dbReference type="BRENDA" id="2.5.1.19">
    <property type="organism ID" value="8143"/>
</dbReference>
<dbReference type="UniPathway" id="UPA00053">
    <property type="reaction ID" value="UER00089"/>
</dbReference>
<dbReference type="Proteomes" id="UP000000547">
    <property type="component" value="Chromosome"/>
</dbReference>
<dbReference type="GO" id="GO:0005737">
    <property type="term" value="C:cytoplasm"/>
    <property type="evidence" value="ECO:0007669"/>
    <property type="project" value="UniProtKB-SubCell"/>
</dbReference>
<dbReference type="GO" id="GO:0003866">
    <property type="term" value="F:3-phosphoshikimate 1-carboxyvinyltransferase activity"/>
    <property type="evidence" value="ECO:0007669"/>
    <property type="project" value="UniProtKB-UniRule"/>
</dbReference>
<dbReference type="GO" id="GO:0008652">
    <property type="term" value="P:amino acid biosynthetic process"/>
    <property type="evidence" value="ECO:0007669"/>
    <property type="project" value="UniProtKB-KW"/>
</dbReference>
<dbReference type="GO" id="GO:0009073">
    <property type="term" value="P:aromatic amino acid family biosynthetic process"/>
    <property type="evidence" value="ECO:0007669"/>
    <property type="project" value="UniProtKB-KW"/>
</dbReference>
<dbReference type="GO" id="GO:0009423">
    <property type="term" value="P:chorismate biosynthetic process"/>
    <property type="evidence" value="ECO:0007669"/>
    <property type="project" value="UniProtKB-UniRule"/>
</dbReference>
<dbReference type="CDD" id="cd01556">
    <property type="entry name" value="EPSP_synthase"/>
    <property type="match status" value="1"/>
</dbReference>
<dbReference type="FunFam" id="3.65.10.10:FF:000003">
    <property type="entry name" value="3-phosphoshikimate 1-carboxyvinyltransferase"/>
    <property type="match status" value="1"/>
</dbReference>
<dbReference type="FunFam" id="3.65.10.10:FF:000004">
    <property type="entry name" value="3-phosphoshikimate 1-carboxyvinyltransferase"/>
    <property type="match status" value="1"/>
</dbReference>
<dbReference type="Gene3D" id="3.65.10.10">
    <property type="entry name" value="Enolpyruvate transferase domain"/>
    <property type="match status" value="2"/>
</dbReference>
<dbReference type="HAMAP" id="MF_00210">
    <property type="entry name" value="EPSP_synth"/>
    <property type="match status" value="1"/>
</dbReference>
<dbReference type="InterPro" id="IPR001986">
    <property type="entry name" value="Enolpyruvate_Tfrase_dom"/>
</dbReference>
<dbReference type="InterPro" id="IPR036968">
    <property type="entry name" value="Enolpyruvate_Tfrase_sf"/>
</dbReference>
<dbReference type="InterPro" id="IPR006264">
    <property type="entry name" value="EPSP_synthase"/>
</dbReference>
<dbReference type="InterPro" id="IPR023193">
    <property type="entry name" value="EPSP_synthase_CS"/>
</dbReference>
<dbReference type="InterPro" id="IPR013792">
    <property type="entry name" value="RNA3'P_cycl/enolpyr_Trfase_a/b"/>
</dbReference>
<dbReference type="NCBIfam" id="TIGR01356">
    <property type="entry name" value="aroA"/>
    <property type="match status" value="1"/>
</dbReference>
<dbReference type="PANTHER" id="PTHR21090">
    <property type="entry name" value="AROM/DEHYDROQUINATE SYNTHASE"/>
    <property type="match status" value="1"/>
</dbReference>
<dbReference type="PANTHER" id="PTHR21090:SF5">
    <property type="entry name" value="PENTAFUNCTIONAL AROM POLYPEPTIDE"/>
    <property type="match status" value="1"/>
</dbReference>
<dbReference type="Pfam" id="PF00275">
    <property type="entry name" value="EPSP_synthase"/>
    <property type="match status" value="1"/>
</dbReference>
<dbReference type="PIRSF" id="PIRSF000505">
    <property type="entry name" value="EPSPS"/>
    <property type="match status" value="1"/>
</dbReference>
<dbReference type="SUPFAM" id="SSF55205">
    <property type="entry name" value="EPT/RTPC-like"/>
    <property type="match status" value="1"/>
</dbReference>
<dbReference type="PROSITE" id="PS00104">
    <property type="entry name" value="EPSP_SYNTHASE_1"/>
    <property type="match status" value="1"/>
</dbReference>
<dbReference type="PROSITE" id="PS00885">
    <property type="entry name" value="EPSP_SYNTHASE_2"/>
    <property type="match status" value="1"/>
</dbReference>
<comment type="function">
    <text evidence="1">Catalyzes the transfer of the enolpyruvyl moiety of phosphoenolpyruvate (PEP) to the 5-hydroxyl of shikimate-3-phosphate (S3P) to produce enolpyruvyl shikimate-3-phosphate and inorganic phosphate.</text>
</comment>
<comment type="catalytic activity">
    <reaction evidence="1">
        <text>3-phosphoshikimate + phosphoenolpyruvate = 5-O-(1-carboxyvinyl)-3-phosphoshikimate + phosphate</text>
        <dbReference type="Rhea" id="RHEA:21256"/>
        <dbReference type="ChEBI" id="CHEBI:43474"/>
        <dbReference type="ChEBI" id="CHEBI:57701"/>
        <dbReference type="ChEBI" id="CHEBI:58702"/>
        <dbReference type="ChEBI" id="CHEBI:145989"/>
        <dbReference type="EC" id="2.5.1.19"/>
    </reaction>
    <physiologicalReaction direction="left-to-right" evidence="1">
        <dbReference type="Rhea" id="RHEA:21257"/>
    </physiologicalReaction>
</comment>
<comment type="pathway">
    <text evidence="1">Metabolic intermediate biosynthesis; chorismate biosynthesis; chorismate from D-erythrose 4-phosphate and phosphoenolpyruvate: step 6/7.</text>
</comment>
<comment type="subunit">
    <text evidence="1">Monomer.</text>
</comment>
<comment type="subcellular location">
    <subcellularLocation>
        <location evidence="1">Cytoplasm</location>
    </subcellularLocation>
</comment>
<comment type="similarity">
    <text evidence="1">Belongs to the EPSP synthase family.</text>
</comment>
<proteinExistence type="evidence at protein level"/>
<protein>
    <recommendedName>
        <fullName evidence="1">3-phosphoshikimate 1-carboxyvinyltransferase</fullName>
        <ecNumber evidence="1">2.5.1.19</ecNumber>
    </recommendedName>
    <alternativeName>
        <fullName evidence="1">5-enolpyruvylshikimate-3-phosphate synthase</fullName>
        <shortName evidence="1">EPSP synthase</shortName>
        <shortName evidence="1">EPSPS</shortName>
    </alternativeName>
</protein>
<gene>
    <name evidence="1" type="primary">aroA</name>
    <name type="ordered locus">CPS_2333</name>
</gene>
<reference key="1">
    <citation type="journal article" date="2005" name="Proc. Natl. Acad. Sci. U.S.A.">
        <title>The psychrophilic lifestyle as revealed by the genome sequence of Colwellia psychrerythraea 34H through genomic and proteomic analyses.</title>
        <authorList>
            <person name="Methe B.A."/>
            <person name="Nelson K.E."/>
            <person name="Deming J.W."/>
            <person name="Momen B."/>
            <person name="Melamud E."/>
            <person name="Zhang X."/>
            <person name="Moult J."/>
            <person name="Madupu R."/>
            <person name="Nelson W.C."/>
            <person name="Dodson R.J."/>
            <person name="Brinkac L.M."/>
            <person name="Daugherty S.C."/>
            <person name="Durkin A.S."/>
            <person name="DeBoy R.T."/>
            <person name="Kolonay J.F."/>
            <person name="Sullivan S.A."/>
            <person name="Zhou L."/>
            <person name="Davidsen T.M."/>
            <person name="Wu M."/>
            <person name="Huston A.L."/>
            <person name="Lewis M."/>
            <person name="Weaver B."/>
            <person name="Weidman J.F."/>
            <person name="Khouri H."/>
            <person name="Utterback T.R."/>
            <person name="Feldblyum T.V."/>
            <person name="Fraser C.M."/>
        </authorList>
    </citation>
    <scope>NUCLEOTIDE SEQUENCE [LARGE SCALE GENOMIC DNA]</scope>
    <source>
        <strain>34H / ATCC BAA-681</strain>
    </source>
</reference>